<reference key="1">
    <citation type="journal article" date="1995" name="Mol. Endocrinol.">
        <title>Two classes of proteins dependent on either the presence or absence of thyroid hormone for interaction with the thyroid hormone receptor.</title>
        <authorList>
            <person name="Lee J.W."/>
            <person name="Choi H.-S."/>
            <person name="Gyuris J."/>
            <person name="Brent R."/>
            <person name="Moore D.D."/>
        </authorList>
    </citation>
    <scope>NUCLEOTIDE SEQUENCE [MRNA] (ISOFORM 1)</scope>
    <scope>INTERACTION WITH THYROID RECEPTOR</scope>
    <scope>TISSUE SPECIFICITY</scope>
</reference>
<reference key="2">
    <citation type="journal article" date="2002" name="Virology">
        <title>Differential display RT-PCR analysis of enterovirus-71-infected rhabdomyosarcoma cells reveals mRNA expression responses of multiple human genes with known and novel functions.</title>
        <authorList>
            <person name="Leong P.W."/>
            <person name="Liew K."/>
            <person name="Lim W."/>
            <person name="Chow V.T.K."/>
        </authorList>
    </citation>
    <scope>NUCLEOTIDE SEQUENCE [MRNA] (ISOFORM 2)</scope>
</reference>
<reference key="3">
    <citation type="submission" date="2000-06" db="EMBL/GenBank/DDBJ databases">
        <title>Human acute promyelocytic leukemia cell line NB4's apoptosis related genes.</title>
        <authorList>
            <person name="Yu W.-Q."/>
            <person name="Sun B.-Z."/>
            <person name="Chai Y.-B."/>
            <person name="Zhu F."/>
            <person name="Liu X.-S."/>
            <person name="Li Z."/>
            <person name="Lu F."/>
            <person name="Yan W."/>
            <person name="Yang H."/>
            <person name="Zhao Z.-L."/>
        </authorList>
    </citation>
    <scope>NUCLEOTIDE SEQUENCE [LARGE SCALE MRNA] (ISOFORM 1)</scope>
    <source>
        <tissue>Promyelocytic leukemia</tissue>
    </source>
</reference>
<reference key="4">
    <citation type="submission" date="2001-07" db="EMBL/GenBank/DDBJ databases">
        <title>Identification and characterization of an estrogen inducible TRIP7-like mRNA isolated by differential display.</title>
        <authorList>
            <person name="Go V.S."/>
            <person name="Pogo B.G.T."/>
        </authorList>
    </citation>
    <scope>NUCLEOTIDE SEQUENCE [MRNA] (ISOFORM 1)</scope>
</reference>
<reference key="5">
    <citation type="journal article" date="2004" name="Nat. Genet.">
        <title>Complete sequencing and characterization of 21,243 full-length human cDNAs.</title>
        <authorList>
            <person name="Ota T."/>
            <person name="Suzuki Y."/>
            <person name="Nishikawa T."/>
            <person name="Otsuki T."/>
            <person name="Sugiyama T."/>
            <person name="Irie R."/>
            <person name="Wakamatsu A."/>
            <person name="Hayashi K."/>
            <person name="Sato H."/>
            <person name="Nagai K."/>
            <person name="Kimura K."/>
            <person name="Makita H."/>
            <person name="Sekine M."/>
            <person name="Obayashi M."/>
            <person name="Nishi T."/>
            <person name="Shibahara T."/>
            <person name="Tanaka T."/>
            <person name="Ishii S."/>
            <person name="Yamamoto J."/>
            <person name="Saito K."/>
            <person name="Kawai Y."/>
            <person name="Isono Y."/>
            <person name="Nakamura Y."/>
            <person name="Nagahari K."/>
            <person name="Murakami K."/>
            <person name="Yasuda T."/>
            <person name="Iwayanagi T."/>
            <person name="Wagatsuma M."/>
            <person name="Shiratori A."/>
            <person name="Sudo H."/>
            <person name="Hosoiri T."/>
            <person name="Kaku Y."/>
            <person name="Kodaira H."/>
            <person name="Kondo H."/>
            <person name="Sugawara M."/>
            <person name="Takahashi M."/>
            <person name="Kanda K."/>
            <person name="Yokoi T."/>
            <person name="Furuya T."/>
            <person name="Kikkawa E."/>
            <person name="Omura Y."/>
            <person name="Abe K."/>
            <person name="Kamihara K."/>
            <person name="Katsuta N."/>
            <person name="Sato K."/>
            <person name="Tanikawa M."/>
            <person name="Yamazaki M."/>
            <person name="Ninomiya K."/>
            <person name="Ishibashi T."/>
            <person name="Yamashita H."/>
            <person name="Murakawa K."/>
            <person name="Fujimori K."/>
            <person name="Tanai H."/>
            <person name="Kimata M."/>
            <person name="Watanabe M."/>
            <person name="Hiraoka S."/>
            <person name="Chiba Y."/>
            <person name="Ishida S."/>
            <person name="Ono Y."/>
            <person name="Takiguchi S."/>
            <person name="Watanabe S."/>
            <person name="Yosida M."/>
            <person name="Hotuta T."/>
            <person name="Kusano J."/>
            <person name="Kanehori K."/>
            <person name="Takahashi-Fujii A."/>
            <person name="Hara H."/>
            <person name="Tanase T.-O."/>
            <person name="Nomura Y."/>
            <person name="Togiya S."/>
            <person name="Komai F."/>
            <person name="Hara R."/>
            <person name="Takeuchi K."/>
            <person name="Arita M."/>
            <person name="Imose N."/>
            <person name="Musashino K."/>
            <person name="Yuuki H."/>
            <person name="Oshima A."/>
            <person name="Sasaki N."/>
            <person name="Aotsuka S."/>
            <person name="Yoshikawa Y."/>
            <person name="Matsunawa H."/>
            <person name="Ichihara T."/>
            <person name="Shiohata N."/>
            <person name="Sano S."/>
            <person name="Moriya S."/>
            <person name="Momiyama H."/>
            <person name="Satoh N."/>
            <person name="Takami S."/>
            <person name="Terashima Y."/>
            <person name="Suzuki O."/>
            <person name="Nakagawa S."/>
            <person name="Senoh A."/>
            <person name="Mizoguchi H."/>
            <person name="Goto Y."/>
            <person name="Shimizu F."/>
            <person name="Wakebe H."/>
            <person name="Hishigaki H."/>
            <person name="Watanabe T."/>
            <person name="Sugiyama A."/>
            <person name="Takemoto M."/>
            <person name="Kawakami B."/>
            <person name="Yamazaki M."/>
            <person name="Watanabe K."/>
            <person name="Kumagai A."/>
            <person name="Itakura S."/>
            <person name="Fukuzumi Y."/>
            <person name="Fujimori Y."/>
            <person name="Komiyama M."/>
            <person name="Tashiro H."/>
            <person name="Tanigami A."/>
            <person name="Fujiwara T."/>
            <person name="Ono T."/>
            <person name="Yamada K."/>
            <person name="Fujii Y."/>
            <person name="Ozaki K."/>
            <person name="Hirao M."/>
            <person name="Ohmori Y."/>
            <person name="Kawabata A."/>
            <person name="Hikiji T."/>
            <person name="Kobatake N."/>
            <person name="Inagaki H."/>
            <person name="Ikema Y."/>
            <person name="Okamoto S."/>
            <person name="Okitani R."/>
            <person name="Kawakami T."/>
            <person name="Noguchi S."/>
            <person name="Itoh T."/>
            <person name="Shigeta K."/>
            <person name="Senba T."/>
            <person name="Matsumura K."/>
            <person name="Nakajima Y."/>
            <person name="Mizuno T."/>
            <person name="Morinaga M."/>
            <person name="Sasaki M."/>
            <person name="Togashi T."/>
            <person name="Oyama M."/>
            <person name="Hata H."/>
            <person name="Watanabe M."/>
            <person name="Komatsu T."/>
            <person name="Mizushima-Sugano J."/>
            <person name="Satoh T."/>
            <person name="Shirai Y."/>
            <person name="Takahashi Y."/>
            <person name="Nakagawa K."/>
            <person name="Okumura K."/>
            <person name="Nagase T."/>
            <person name="Nomura N."/>
            <person name="Kikuchi H."/>
            <person name="Masuho Y."/>
            <person name="Yamashita R."/>
            <person name="Nakai K."/>
            <person name="Yada T."/>
            <person name="Nakamura Y."/>
            <person name="Ohara O."/>
            <person name="Isogai T."/>
            <person name="Sugano S."/>
        </authorList>
    </citation>
    <scope>NUCLEOTIDE SEQUENCE [LARGE SCALE MRNA] (ISOFORM 2)</scope>
    <source>
        <tissue>Hippocampus</tissue>
    </source>
</reference>
<reference key="6">
    <citation type="journal article" date="2003" name="Nature">
        <title>The DNA sequence and analysis of human chromosome 6.</title>
        <authorList>
            <person name="Mungall A.J."/>
            <person name="Palmer S.A."/>
            <person name="Sims S.K."/>
            <person name="Edwards C.A."/>
            <person name="Ashurst J.L."/>
            <person name="Wilming L."/>
            <person name="Jones M.C."/>
            <person name="Horton R."/>
            <person name="Hunt S.E."/>
            <person name="Scott C.E."/>
            <person name="Gilbert J.G.R."/>
            <person name="Clamp M.E."/>
            <person name="Bethel G."/>
            <person name="Milne S."/>
            <person name="Ainscough R."/>
            <person name="Almeida J.P."/>
            <person name="Ambrose K.D."/>
            <person name="Andrews T.D."/>
            <person name="Ashwell R.I.S."/>
            <person name="Babbage A.K."/>
            <person name="Bagguley C.L."/>
            <person name="Bailey J."/>
            <person name="Banerjee R."/>
            <person name="Barker D.J."/>
            <person name="Barlow K.F."/>
            <person name="Bates K."/>
            <person name="Beare D.M."/>
            <person name="Beasley H."/>
            <person name="Beasley O."/>
            <person name="Bird C.P."/>
            <person name="Blakey S.E."/>
            <person name="Bray-Allen S."/>
            <person name="Brook J."/>
            <person name="Brown A.J."/>
            <person name="Brown J.Y."/>
            <person name="Burford D.C."/>
            <person name="Burrill W."/>
            <person name="Burton J."/>
            <person name="Carder C."/>
            <person name="Carter N.P."/>
            <person name="Chapman J.C."/>
            <person name="Clark S.Y."/>
            <person name="Clark G."/>
            <person name="Clee C.M."/>
            <person name="Clegg S."/>
            <person name="Cobley V."/>
            <person name="Collier R.E."/>
            <person name="Collins J.E."/>
            <person name="Colman L.K."/>
            <person name="Corby N.R."/>
            <person name="Coville G.J."/>
            <person name="Culley K.M."/>
            <person name="Dhami P."/>
            <person name="Davies J."/>
            <person name="Dunn M."/>
            <person name="Earthrowl M.E."/>
            <person name="Ellington A.E."/>
            <person name="Evans K.A."/>
            <person name="Faulkner L."/>
            <person name="Francis M.D."/>
            <person name="Frankish A."/>
            <person name="Frankland J."/>
            <person name="French L."/>
            <person name="Garner P."/>
            <person name="Garnett J."/>
            <person name="Ghori M.J."/>
            <person name="Gilby L.M."/>
            <person name="Gillson C.J."/>
            <person name="Glithero R.J."/>
            <person name="Grafham D.V."/>
            <person name="Grant M."/>
            <person name="Gribble S."/>
            <person name="Griffiths C."/>
            <person name="Griffiths M.N.D."/>
            <person name="Hall R."/>
            <person name="Halls K.S."/>
            <person name="Hammond S."/>
            <person name="Harley J.L."/>
            <person name="Hart E.A."/>
            <person name="Heath P.D."/>
            <person name="Heathcott R."/>
            <person name="Holmes S.J."/>
            <person name="Howden P.J."/>
            <person name="Howe K.L."/>
            <person name="Howell G.R."/>
            <person name="Huckle E."/>
            <person name="Humphray S.J."/>
            <person name="Humphries M.D."/>
            <person name="Hunt A.R."/>
            <person name="Johnson C.M."/>
            <person name="Joy A.A."/>
            <person name="Kay M."/>
            <person name="Keenan S.J."/>
            <person name="Kimberley A.M."/>
            <person name="King A."/>
            <person name="Laird G.K."/>
            <person name="Langford C."/>
            <person name="Lawlor S."/>
            <person name="Leongamornlert D.A."/>
            <person name="Leversha M."/>
            <person name="Lloyd C.R."/>
            <person name="Lloyd D.M."/>
            <person name="Loveland J.E."/>
            <person name="Lovell J."/>
            <person name="Martin S."/>
            <person name="Mashreghi-Mohammadi M."/>
            <person name="Maslen G.L."/>
            <person name="Matthews L."/>
            <person name="McCann O.T."/>
            <person name="McLaren S.J."/>
            <person name="McLay K."/>
            <person name="McMurray A."/>
            <person name="Moore M.J.F."/>
            <person name="Mullikin J.C."/>
            <person name="Niblett D."/>
            <person name="Nickerson T."/>
            <person name="Novik K.L."/>
            <person name="Oliver K."/>
            <person name="Overton-Larty E.K."/>
            <person name="Parker A."/>
            <person name="Patel R."/>
            <person name="Pearce A.V."/>
            <person name="Peck A.I."/>
            <person name="Phillimore B.J.C.T."/>
            <person name="Phillips S."/>
            <person name="Plumb R.W."/>
            <person name="Porter K.M."/>
            <person name="Ramsey Y."/>
            <person name="Ranby S.A."/>
            <person name="Rice C.M."/>
            <person name="Ross M.T."/>
            <person name="Searle S.M."/>
            <person name="Sehra H.K."/>
            <person name="Sheridan E."/>
            <person name="Skuce C.D."/>
            <person name="Smith S."/>
            <person name="Smith M."/>
            <person name="Spraggon L."/>
            <person name="Squares S.L."/>
            <person name="Steward C.A."/>
            <person name="Sycamore N."/>
            <person name="Tamlyn-Hall G."/>
            <person name="Tester J."/>
            <person name="Theaker A.J."/>
            <person name="Thomas D.W."/>
            <person name="Thorpe A."/>
            <person name="Tracey A."/>
            <person name="Tromans A."/>
            <person name="Tubby B."/>
            <person name="Wall M."/>
            <person name="Wallis J.M."/>
            <person name="West A.P."/>
            <person name="White S.S."/>
            <person name="Whitehead S.L."/>
            <person name="Whittaker H."/>
            <person name="Wild A."/>
            <person name="Willey D.J."/>
            <person name="Wilmer T.E."/>
            <person name="Wood J.M."/>
            <person name="Wray P.W."/>
            <person name="Wyatt J.C."/>
            <person name="Young L."/>
            <person name="Younger R.M."/>
            <person name="Bentley D.R."/>
            <person name="Coulson A."/>
            <person name="Durbin R.M."/>
            <person name="Hubbard T."/>
            <person name="Sulston J.E."/>
            <person name="Dunham I."/>
            <person name="Rogers J."/>
            <person name="Beck S."/>
        </authorList>
    </citation>
    <scope>NUCLEOTIDE SEQUENCE [LARGE SCALE GENOMIC DNA]</scope>
</reference>
<reference key="7">
    <citation type="submission" date="2005-09" db="EMBL/GenBank/DDBJ databases">
        <authorList>
            <person name="Mural R.J."/>
            <person name="Istrail S."/>
            <person name="Sutton G.G."/>
            <person name="Florea L."/>
            <person name="Halpern A.L."/>
            <person name="Mobarry C.M."/>
            <person name="Lippert R."/>
            <person name="Walenz B."/>
            <person name="Shatkay H."/>
            <person name="Dew I."/>
            <person name="Miller J.R."/>
            <person name="Flanigan M.J."/>
            <person name="Edwards N.J."/>
            <person name="Bolanos R."/>
            <person name="Fasulo D."/>
            <person name="Halldorsson B.V."/>
            <person name="Hannenhalli S."/>
            <person name="Turner R."/>
            <person name="Yooseph S."/>
            <person name="Lu F."/>
            <person name="Nusskern D.R."/>
            <person name="Shue B.C."/>
            <person name="Zheng X.H."/>
            <person name="Zhong F."/>
            <person name="Delcher A.L."/>
            <person name="Huson D.H."/>
            <person name="Kravitz S.A."/>
            <person name="Mouchard L."/>
            <person name="Reinert K."/>
            <person name="Remington K.A."/>
            <person name="Clark A.G."/>
            <person name="Waterman M.S."/>
            <person name="Eichler E.E."/>
            <person name="Adams M.D."/>
            <person name="Hunkapiller M.W."/>
            <person name="Myers E.W."/>
            <person name="Venter J.C."/>
        </authorList>
    </citation>
    <scope>NUCLEOTIDE SEQUENCE [LARGE SCALE GENOMIC DNA]</scope>
</reference>
<reference key="8">
    <citation type="journal article" date="2004" name="Genome Res.">
        <title>The status, quality, and expansion of the NIH full-length cDNA project: the Mammalian Gene Collection (MGC).</title>
        <authorList>
            <consortium name="The MGC Project Team"/>
        </authorList>
    </citation>
    <scope>NUCLEOTIDE SEQUENCE [LARGE SCALE MRNA] (ISOFORM 2)</scope>
    <source>
        <tissue>Lung</tissue>
    </source>
</reference>
<reference key="9">
    <citation type="journal article" date="2007" name="BMC Genomics">
        <title>The full-ORF clone resource of the German cDNA consortium.</title>
        <authorList>
            <person name="Bechtel S."/>
            <person name="Rosenfelder H."/>
            <person name="Duda A."/>
            <person name="Schmidt C.P."/>
            <person name="Ernst U."/>
            <person name="Wellenreuther R."/>
            <person name="Mehrle A."/>
            <person name="Schuster C."/>
            <person name="Bahr A."/>
            <person name="Bloecker H."/>
            <person name="Heubner D."/>
            <person name="Hoerlein A."/>
            <person name="Michel G."/>
            <person name="Wedler H."/>
            <person name="Koehrer K."/>
            <person name="Ottenwaelder B."/>
            <person name="Poustka A."/>
            <person name="Wiemann S."/>
            <person name="Schupp I."/>
        </authorList>
    </citation>
    <scope>NUCLEOTIDE SEQUENCE [LARGE SCALE MRNA] OF 33-99 (ISOFORM 1)</scope>
    <source>
        <tissue>Small intestine</tissue>
    </source>
</reference>
<reference key="10">
    <citation type="journal article" date="2001" name="J. Biol. Chem.">
        <title>HMGN3a and HMGN3b, two protein isoforms with a tissue-specific expression pattern, expand the cellular repertoire of nucleosome-binding proteins.</title>
        <authorList>
            <person name="West K.L."/>
            <person name="Ito Y."/>
            <person name="Birger Y."/>
            <person name="Postnikov Y."/>
            <person name="Shirakawa H."/>
            <person name="Bustin M."/>
        </authorList>
    </citation>
    <scope>ALTERNATIVE SPLICING</scope>
    <scope>INTERACTION WITH NUCLEOSOMES</scope>
    <scope>TISSUE SPECIFICITY</scope>
</reference>
<reference key="11">
    <citation type="journal article" date="2006" name="Cell">
        <title>Global, in vivo, and site-specific phosphorylation dynamics in signaling networks.</title>
        <authorList>
            <person name="Olsen J.V."/>
            <person name="Blagoev B."/>
            <person name="Gnad F."/>
            <person name="Macek B."/>
            <person name="Kumar C."/>
            <person name="Mortensen P."/>
            <person name="Mann M."/>
        </authorList>
    </citation>
    <scope>PHOSPHORYLATION [LARGE SCALE ANALYSIS] AT THR-10</scope>
    <scope>IDENTIFICATION BY MASS SPECTROMETRY [LARGE SCALE ANALYSIS]</scope>
    <source>
        <tissue>Cervix carcinoma</tissue>
    </source>
</reference>
<reference key="12">
    <citation type="journal article" date="2008" name="Proc. Natl. Acad. Sci. U.S.A.">
        <title>A quantitative atlas of mitotic phosphorylation.</title>
        <authorList>
            <person name="Dephoure N."/>
            <person name="Zhou C."/>
            <person name="Villen J."/>
            <person name="Beausoleil S.A."/>
            <person name="Bakalarski C.E."/>
            <person name="Elledge S.J."/>
            <person name="Gygi S.P."/>
        </authorList>
    </citation>
    <scope>PHOSPHORYLATION [LARGE SCALE ANALYSIS] AT SER-93</scope>
    <scope>IDENTIFICATION BY MASS SPECTROMETRY [LARGE SCALE ANALYSIS]</scope>
    <source>
        <tissue>Cervix carcinoma</tissue>
    </source>
</reference>
<reference key="13">
    <citation type="journal article" date="2009" name="Anal. Chem.">
        <title>Lys-N and trypsin cover complementary parts of the phosphoproteome in a refined SCX-based approach.</title>
        <authorList>
            <person name="Gauci S."/>
            <person name="Helbig A.O."/>
            <person name="Slijper M."/>
            <person name="Krijgsveld J."/>
            <person name="Heck A.J."/>
            <person name="Mohammed S."/>
        </authorList>
    </citation>
    <scope>IDENTIFICATION BY MASS SPECTROMETRY [LARGE SCALE ANALYSIS]</scope>
</reference>
<reference key="14">
    <citation type="journal article" date="2010" name="Sci. Signal.">
        <title>Quantitative phosphoproteomics reveals widespread full phosphorylation site occupancy during mitosis.</title>
        <authorList>
            <person name="Olsen J.V."/>
            <person name="Vermeulen M."/>
            <person name="Santamaria A."/>
            <person name="Kumar C."/>
            <person name="Miller M.L."/>
            <person name="Jensen L.J."/>
            <person name="Gnad F."/>
            <person name="Cox J."/>
            <person name="Jensen T.S."/>
            <person name="Nigg E.A."/>
            <person name="Brunak S."/>
            <person name="Mann M."/>
        </authorList>
    </citation>
    <scope>PHOSPHORYLATION [LARGE SCALE ANALYSIS] AT SER-6; THR-10 AND SER-78</scope>
    <scope>IDENTIFICATION BY MASS SPECTROMETRY [LARGE SCALE ANALYSIS]</scope>
    <source>
        <tissue>Cervix carcinoma</tissue>
    </source>
</reference>
<reference key="15">
    <citation type="journal article" date="2011" name="BMC Syst. Biol.">
        <title>Initial characterization of the human central proteome.</title>
        <authorList>
            <person name="Burkard T.R."/>
            <person name="Planyavsky M."/>
            <person name="Kaupe I."/>
            <person name="Breitwieser F.P."/>
            <person name="Buerckstuemmer T."/>
            <person name="Bennett K.L."/>
            <person name="Superti-Furga G."/>
            <person name="Colinge J."/>
        </authorList>
    </citation>
    <scope>IDENTIFICATION BY MASS SPECTROMETRY [LARGE SCALE ANALYSIS]</scope>
</reference>
<reference key="16">
    <citation type="journal article" date="2011" name="Sci. Signal.">
        <title>System-wide temporal characterization of the proteome and phosphoproteome of human embryonic stem cell differentiation.</title>
        <authorList>
            <person name="Rigbolt K.T."/>
            <person name="Prokhorova T.A."/>
            <person name="Akimov V."/>
            <person name="Henningsen J."/>
            <person name="Johansen P.T."/>
            <person name="Kratchmarova I."/>
            <person name="Kassem M."/>
            <person name="Mann M."/>
            <person name="Olsen J.V."/>
            <person name="Blagoev B."/>
        </authorList>
    </citation>
    <scope>PHOSPHORYLATION [LARGE SCALE ANALYSIS] AT SER-6; THR-10 AND SER-78</scope>
    <scope>IDENTIFICATION BY MASS SPECTROMETRY [LARGE SCALE ANALYSIS]</scope>
</reference>
<reference key="17">
    <citation type="journal article" date="2013" name="J. Proteome Res.">
        <title>Toward a comprehensive characterization of a human cancer cell phosphoproteome.</title>
        <authorList>
            <person name="Zhou H."/>
            <person name="Di Palma S."/>
            <person name="Preisinger C."/>
            <person name="Peng M."/>
            <person name="Polat A.N."/>
            <person name="Heck A.J."/>
            <person name="Mohammed S."/>
        </authorList>
    </citation>
    <scope>PHOSPHORYLATION [LARGE SCALE ANALYSIS] AT SER-78</scope>
    <scope>IDENTIFICATION BY MASS SPECTROMETRY [LARGE SCALE ANALYSIS]</scope>
    <source>
        <tissue>Cervix carcinoma</tissue>
        <tissue>Erythroleukemia</tissue>
    </source>
</reference>
<reference key="18">
    <citation type="journal article" date="2021" name="Proc. Natl. Acad. Sci. U.S.A.">
        <title>A short ORF-encoded transcriptional regulator.</title>
        <authorList>
            <person name="Koh M."/>
            <person name="Ahmad I."/>
            <person name="Ko Y."/>
            <person name="Zhang Y."/>
            <person name="Martinez T.F."/>
            <person name="Diedrich J.K."/>
            <person name="Chu Q."/>
            <person name="Moresco J.J."/>
            <person name="Erb M.A."/>
            <person name="Saghatelian A."/>
            <person name="Schultz P.G."/>
            <person name="Bollong M.J."/>
        </authorList>
    </citation>
    <scope>INTERACTION WITH SEHBP</scope>
</reference>
<organism>
    <name type="scientific">Homo sapiens</name>
    <name type="common">Human</name>
    <dbReference type="NCBI Taxonomy" id="9606"/>
    <lineage>
        <taxon>Eukaryota</taxon>
        <taxon>Metazoa</taxon>
        <taxon>Chordata</taxon>
        <taxon>Craniata</taxon>
        <taxon>Vertebrata</taxon>
        <taxon>Euteleostomi</taxon>
        <taxon>Mammalia</taxon>
        <taxon>Eutheria</taxon>
        <taxon>Euarchontoglires</taxon>
        <taxon>Primates</taxon>
        <taxon>Haplorrhini</taxon>
        <taxon>Catarrhini</taxon>
        <taxon>Hominidae</taxon>
        <taxon>Homo</taxon>
    </lineage>
</organism>
<name>HMGN3_HUMAN</name>
<evidence type="ECO:0000250" key="1"/>
<evidence type="ECO:0000256" key="2">
    <source>
        <dbReference type="SAM" id="MobiDB-lite"/>
    </source>
</evidence>
<evidence type="ECO:0000269" key="3">
    <source>
    </source>
</evidence>
<evidence type="ECO:0000269" key="4">
    <source>
    </source>
</evidence>
<evidence type="ECO:0000269" key="5">
    <source>
    </source>
</evidence>
<evidence type="ECO:0000303" key="6">
    <source>
    </source>
</evidence>
<evidence type="ECO:0000303" key="7">
    <source>
    </source>
</evidence>
<evidence type="ECO:0000303" key="8">
    <source>
    </source>
</evidence>
<evidence type="ECO:0000305" key="9"/>
<evidence type="ECO:0007744" key="10">
    <source>
    </source>
</evidence>
<evidence type="ECO:0007744" key="11">
    <source>
    </source>
</evidence>
<evidence type="ECO:0007744" key="12">
    <source>
    </source>
</evidence>
<evidence type="ECO:0007744" key="13">
    <source>
    </source>
</evidence>
<evidence type="ECO:0007744" key="14">
    <source>
    </source>
</evidence>
<accession>Q15651</accession>
<accession>B2RD37</accession>
<accession>Q5HYD3</accession>
<accession>Q7RTT0</accession>
<accession>Q969M5</accession>
<accession>Q9BZT7</accession>
<feature type="chain" id="PRO_0000232574" description="High mobility group nucleosome-binding domain-containing protein 3">
    <location>
        <begin position="1"/>
        <end position="99"/>
    </location>
</feature>
<feature type="region of interest" description="Disordered" evidence="2">
    <location>
        <begin position="1"/>
        <end position="99"/>
    </location>
</feature>
<feature type="compositionally biased region" description="Basic and acidic residues" evidence="2">
    <location>
        <begin position="1"/>
        <end position="25"/>
    </location>
</feature>
<feature type="compositionally biased region" description="Basic and acidic residues" evidence="2">
    <location>
        <begin position="39"/>
        <end position="53"/>
    </location>
</feature>
<feature type="compositionally biased region" description="Basic and acidic residues" evidence="2">
    <location>
        <begin position="62"/>
        <end position="72"/>
    </location>
</feature>
<feature type="compositionally biased region" description="Basic and acidic residues" evidence="2">
    <location>
        <begin position="81"/>
        <end position="93"/>
    </location>
</feature>
<feature type="modified residue" description="Phosphoserine" evidence="12 13">
    <location>
        <position position="6"/>
    </location>
</feature>
<feature type="modified residue" description="Phosphothreonine" evidence="10 12 13">
    <location>
        <position position="10"/>
    </location>
</feature>
<feature type="modified residue" description="Phosphoserine" evidence="12 13 14">
    <location>
        <position position="78"/>
    </location>
</feature>
<feature type="modified residue" description="Phosphoserine" evidence="11">
    <location>
        <position position="93"/>
    </location>
</feature>
<feature type="splice variant" id="VSP_017907" description="In isoform 2." evidence="6 7 8">
    <original>AP</original>
    <variation>EN</variation>
    <location>
        <begin position="76"/>
        <end position="77"/>
    </location>
</feature>
<feature type="splice variant" id="VSP_017908" description="In isoform 2." evidence="6 7 8">
    <location>
        <begin position="78"/>
        <end position="99"/>
    </location>
</feature>
<keyword id="KW-0025">Alternative splicing</keyword>
<keyword id="KW-0156">Chromatin regulator</keyword>
<keyword id="KW-0238">DNA-binding</keyword>
<keyword id="KW-0539">Nucleus</keyword>
<keyword id="KW-0597">Phosphoprotein</keyword>
<keyword id="KW-1267">Proteomics identification</keyword>
<keyword id="KW-1185">Reference proteome</keyword>
<proteinExistence type="evidence at protein level"/>
<gene>
    <name type="primary">HMGN3</name>
    <name type="synonym">TRIP7</name>
    <name type="ORF">PNAS-24</name>
</gene>
<dbReference type="EMBL" id="L40357">
    <property type="protein sequence ID" value="AAA73877.1"/>
    <property type="status" value="ALT_INIT"/>
    <property type="molecule type" value="mRNA"/>
</dbReference>
<dbReference type="EMBL" id="AF401520">
    <property type="protein sequence ID" value="AAK92012.1"/>
    <property type="molecule type" value="mRNA"/>
</dbReference>
<dbReference type="EMBL" id="AF274949">
    <property type="protein sequence ID" value="AAK07526.1"/>
    <property type="molecule type" value="mRNA"/>
</dbReference>
<dbReference type="EMBL" id="AY043282">
    <property type="protein sequence ID" value="AAK85736.1"/>
    <property type="molecule type" value="mRNA"/>
</dbReference>
<dbReference type="EMBL" id="AK315391">
    <property type="protein sequence ID" value="BAG37784.1"/>
    <property type="molecule type" value="mRNA"/>
</dbReference>
<dbReference type="EMBL" id="AL355796">
    <property type="status" value="NOT_ANNOTATED_CDS"/>
    <property type="molecule type" value="Genomic_DNA"/>
</dbReference>
<dbReference type="EMBL" id="CH471051">
    <property type="protein sequence ID" value="EAW48711.1"/>
    <property type="molecule type" value="Genomic_DNA"/>
</dbReference>
<dbReference type="EMBL" id="BC009529">
    <property type="protein sequence ID" value="AAH09529.1"/>
    <property type="molecule type" value="mRNA"/>
</dbReference>
<dbReference type="EMBL" id="BK000003">
    <property type="protein sequence ID" value="DAA00392.1"/>
    <property type="molecule type" value="mRNA"/>
</dbReference>
<dbReference type="EMBL" id="BK000006">
    <property type="protein sequence ID" value="DAA00395.1"/>
    <property type="molecule type" value="mRNA"/>
</dbReference>
<dbReference type="EMBL" id="BX648085">
    <property type="protein sequence ID" value="CAI46267.1"/>
    <property type="molecule type" value="Transcribed_RNA"/>
</dbReference>
<dbReference type="CCDS" id="CCDS4988.1">
    <molecule id="Q15651-1"/>
</dbReference>
<dbReference type="CCDS" id="CCDS4989.1">
    <molecule id="Q15651-2"/>
</dbReference>
<dbReference type="RefSeq" id="NP_001188291.1">
    <property type="nucleotide sequence ID" value="NM_001201362.1"/>
</dbReference>
<dbReference type="RefSeq" id="NP_001188292.1">
    <property type="nucleotide sequence ID" value="NM_001201363.1"/>
</dbReference>
<dbReference type="RefSeq" id="NP_001305813.1">
    <property type="nucleotide sequence ID" value="NM_001318884.1"/>
</dbReference>
<dbReference type="RefSeq" id="NP_001305814.1">
    <property type="nucleotide sequence ID" value="NM_001318885.1"/>
</dbReference>
<dbReference type="RefSeq" id="NP_001305815.1">
    <property type="nucleotide sequence ID" value="NM_001318886.1"/>
</dbReference>
<dbReference type="RefSeq" id="NP_001305816.1">
    <property type="nucleotide sequence ID" value="NM_001318887.1"/>
</dbReference>
<dbReference type="RefSeq" id="NP_001305817.1">
    <property type="nucleotide sequence ID" value="NM_001318888.1"/>
</dbReference>
<dbReference type="RefSeq" id="NP_004233.1">
    <molecule id="Q15651-1"/>
    <property type="nucleotide sequence ID" value="NM_004242.4"/>
</dbReference>
<dbReference type="RefSeq" id="NP_620058.1">
    <molecule id="Q15651-2"/>
    <property type="nucleotide sequence ID" value="NM_138730.3"/>
</dbReference>
<dbReference type="BioGRID" id="114734">
    <property type="interactions" value="86"/>
</dbReference>
<dbReference type="FunCoup" id="Q15651">
    <property type="interactions" value="1913"/>
</dbReference>
<dbReference type="IntAct" id="Q15651">
    <property type="interactions" value="23"/>
</dbReference>
<dbReference type="STRING" id="9606.ENSP00000482613"/>
<dbReference type="GlyGen" id="Q15651">
    <property type="glycosylation" value="1 site, 1 O-linked glycan (1 site)"/>
</dbReference>
<dbReference type="iPTMnet" id="Q15651"/>
<dbReference type="PhosphoSitePlus" id="Q15651"/>
<dbReference type="BioMuta" id="HMGN3"/>
<dbReference type="DMDM" id="23831169"/>
<dbReference type="jPOST" id="Q15651"/>
<dbReference type="MassIVE" id="Q15651"/>
<dbReference type="PeptideAtlas" id="Q15651"/>
<dbReference type="ProteomicsDB" id="60689">
    <molecule id="Q15651-1"/>
</dbReference>
<dbReference type="ProteomicsDB" id="60690">
    <molecule id="Q15651-2"/>
</dbReference>
<dbReference type="Pumba" id="Q15651"/>
<dbReference type="TopDownProteomics" id="Q15651-1">
    <molecule id="Q15651-1"/>
</dbReference>
<dbReference type="TopDownProteomics" id="Q15651-2">
    <molecule id="Q15651-2"/>
</dbReference>
<dbReference type="Antibodypedia" id="3656">
    <property type="antibodies" value="163 antibodies from 24 providers"/>
</dbReference>
<dbReference type="DNASU" id="9324"/>
<dbReference type="Ensembl" id="ENST00000275036.11">
    <molecule id="Q15651-2"/>
    <property type="protein sequence ID" value="ENSP00000275036.7"/>
    <property type="gene ID" value="ENSG00000118418.16"/>
</dbReference>
<dbReference type="Ensembl" id="ENST00000344726.10">
    <molecule id="Q15651-1"/>
    <property type="protein sequence ID" value="ENSP00000341267.5"/>
    <property type="gene ID" value="ENSG00000118418.16"/>
</dbReference>
<dbReference type="GeneID" id="9324"/>
<dbReference type="KEGG" id="hsa:9324"/>
<dbReference type="UCSC" id="uc003pis.4">
    <molecule id="Q15651-1"/>
    <property type="organism name" value="human"/>
</dbReference>
<dbReference type="AGR" id="HGNC:12312"/>
<dbReference type="CTD" id="9324"/>
<dbReference type="DisGeNET" id="9324"/>
<dbReference type="GeneCards" id="HMGN3"/>
<dbReference type="HGNC" id="HGNC:12312">
    <property type="gene designation" value="HMGN3"/>
</dbReference>
<dbReference type="HPA" id="ENSG00000118418">
    <property type="expression patterns" value="Low tissue specificity"/>
</dbReference>
<dbReference type="MIM" id="604502">
    <property type="type" value="gene"/>
</dbReference>
<dbReference type="neXtProt" id="NX_Q15651"/>
<dbReference type="OpenTargets" id="ENSG00000118418"/>
<dbReference type="PharmGKB" id="PA36990"/>
<dbReference type="VEuPathDB" id="HostDB:ENSG00000118418"/>
<dbReference type="GeneTree" id="ENSGT00950000182802"/>
<dbReference type="HOGENOM" id="CLU_141985_2_2_1"/>
<dbReference type="InParanoid" id="Q15651"/>
<dbReference type="OMA" id="QARTEIC"/>
<dbReference type="OrthoDB" id="8956258at2759"/>
<dbReference type="PAN-GO" id="Q15651">
    <property type="GO annotations" value="3 GO annotations based on evolutionary models"/>
</dbReference>
<dbReference type="PhylomeDB" id="Q15651"/>
<dbReference type="PathwayCommons" id="Q15651"/>
<dbReference type="SignaLink" id="Q15651"/>
<dbReference type="BioGRID-ORCS" id="9324">
    <property type="hits" value="7 hits in 1125 CRISPR screens"/>
</dbReference>
<dbReference type="ChiTaRS" id="HMGN3">
    <property type="organism name" value="human"/>
</dbReference>
<dbReference type="GeneWiki" id="HMGN3"/>
<dbReference type="GenomeRNAi" id="9324"/>
<dbReference type="Pharos" id="Q15651">
    <property type="development level" value="Tbio"/>
</dbReference>
<dbReference type="PRO" id="PR:Q15651"/>
<dbReference type="Proteomes" id="UP000005640">
    <property type="component" value="Chromosome 6"/>
</dbReference>
<dbReference type="RNAct" id="Q15651">
    <property type="molecule type" value="protein"/>
</dbReference>
<dbReference type="Bgee" id="ENSG00000118418">
    <property type="expression patterns" value="Expressed in bronchial epithelial cell and 212 other cell types or tissues"/>
</dbReference>
<dbReference type="ExpressionAtlas" id="Q15651">
    <property type="expression patterns" value="baseline and differential"/>
</dbReference>
<dbReference type="GO" id="GO:0000785">
    <property type="term" value="C:chromatin"/>
    <property type="evidence" value="ECO:0007669"/>
    <property type="project" value="InterPro"/>
</dbReference>
<dbReference type="GO" id="GO:0005829">
    <property type="term" value="C:cytosol"/>
    <property type="evidence" value="ECO:0000314"/>
    <property type="project" value="HPA"/>
</dbReference>
<dbReference type="GO" id="GO:0005654">
    <property type="term" value="C:nucleoplasm"/>
    <property type="evidence" value="ECO:0000314"/>
    <property type="project" value="HPA"/>
</dbReference>
<dbReference type="GO" id="GO:0005634">
    <property type="term" value="C:nucleus"/>
    <property type="evidence" value="ECO:0000318"/>
    <property type="project" value="GO_Central"/>
</dbReference>
<dbReference type="GO" id="GO:0003682">
    <property type="term" value="F:chromatin binding"/>
    <property type="evidence" value="ECO:0000318"/>
    <property type="project" value="GO_Central"/>
</dbReference>
<dbReference type="GO" id="GO:0046966">
    <property type="term" value="F:nuclear thyroid hormone receptor binding"/>
    <property type="evidence" value="ECO:0000303"/>
    <property type="project" value="UniProtKB"/>
</dbReference>
<dbReference type="GO" id="GO:0031492">
    <property type="term" value="F:nucleosomal DNA binding"/>
    <property type="evidence" value="ECO:0007669"/>
    <property type="project" value="InterPro"/>
</dbReference>
<dbReference type="GO" id="GO:0006325">
    <property type="term" value="P:chromatin organization"/>
    <property type="evidence" value="ECO:0000318"/>
    <property type="project" value="GO_Central"/>
</dbReference>
<dbReference type="InterPro" id="IPR000079">
    <property type="entry name" value="HMGN_fam"/>
</dbReference>
<dbReference type="PANTHER" id="PTHR23087:SF2">
    <property type="entry name" value="HIGH MOBILITY GROUP NUCLEOSOME-BINDING DOMAIN-CONTAINING PROTEIN 3"/>
    <property type="match status" value="1"/>
</dbReference>
<dbReference type="PANTHER" id="PTHR23087">
    <property type="entry name" value="NONHISTONE CHROMOSOMAL PROTEIN HMG"/>
    <property type="match status" value="1"/>
</dbReference>
<dbReference type="Pfam" id="PF01101">
    <property type="entry name" value="HMG14_17"/>
    <property type="match status" value="1"/>
</dbReference>
<dbReference type="PRINTS" id="PR00925">
    <property type="entry name" value="NONHISHMG17"/>
</dbReference>
<dbReference type="SMART" id="SM00527">
    <property type="entry name" value="HMG17"/>
    <property type="match status" value="1"/>
</dbReference>
<dbReference type="PROSITE" id="PS00355">
    <property type="entry name" value="HMG14_17"/>
    <property type="match status" value="1"/>
</dbReference>
<comment type="function">
    <text evidence="1">Binds to nucleosomes, regulating chromatin structure and consequently, chromatin-dependent processes such as transcription, DNA replication and DNA repair. Affects both insulin and glucagon levels and modulates the expression of pancreatic genes involved in insulin secretion. Regulates the expression of the glucose transporter SLC2A2 by binding specifically to its promoter region and recruiting PDX1 and additional transcription factors. Regulates the expression of SLC6A9, a glycine transporter which regulates the glycine concentration in synaptic junctions in the central nervous system, by binding to its transcription start site. May play a role in ocular development and astrocyte function (By similarity).</text>
</comment>
<comment type="subunit">
    <text evidence="3 4 5">Interacts with the ligand binding domain of the thyroid receptor (TR) (in vitro) (PubMed:7776974). Requires the presence of thyroid hormone for its interaction (PubMed:7776974). Interacts with transcriptional regulator SEHBP (PubMed:33468658). Interacts with nucleosomes (PubMed:11356838).</text>
</comment>
<comment type="subcellular location">
    <subcellularLocation>
        <location>Nucleus</location>
    </subcellularLocation>
</comment>
<comment type="alternative products">
    <event type="alternative splicing"/>
    <isoform>
        <id>Q15651-1</id>
        <name>1</name>
        <name>HMGN3a</name>
        <sequence type="displayed"/>
    </isoform>
    <isoform>
        <id>Q15651-2</id>
        <name>2</name>
        <name>HMGN3b</name>
        <sequence type="described" ref="VSP_017907 VSP_017908"/>
    </isoform>
</comment>
<comment type="tissue specificity">
    <text evidence="3 5">Expressed in kidney, lung, pancreas, testis, skeletal muscle, heart, thyroid gland, pituitary gland, prostate and uterus. Low expression in liver, spleen, placenta and ovaries.</text>
</comment>
<comment type="induction">
    <text>By estrogen.</text>
</comment>
<comment type="similarity">
    <text evidence="9">Belongs to the HMGN family.</text>
</comment>
<comment type="sequence caution" evidence="9">
    <conflict type="erroneous initiation">
        <sequence resource="EMBL-CDS" id="AAA73877"/>
    </conflict>
</comment>
<sequence length="99" mass="10666">MPKRKSPENTEGKDGSKVTKQEPTRRSARLSAKPAPPKPEPKPRKTSAKKEPGAKISRGAKGKKEEKQEAGKEGTAPSENGETKAEEAQKTESVDNEGE</sequence>
<protein>
    <recommendedName>
        <fullName>High mobility group nucleosome-binding domain-containing protein 3</fullName>
    </recommendedName>
    <alternativeName>
        <fullName>Thyroid receptor-interacting protein 7</fullName>
        <shortName>TR-interacting protein 7</shortName>
        <shortName>TRIP-7</shortName>
    </alternativeName>
</protein>